<name>TRPA_LEPIN</name>
<reference key="1">
    <citation type="journal article" date="2003" name="Nature">
        <title>Unique physiological and pathogenic features of Leptospira interrogans revealed by whole-genome sequencing.</title>
        <authorList>
            <person name="Ren S.-X."/>
            <person name="Fu G."/>
            <person name="Jiang X.-G."/>
            <person name="Zeng R."/>
            <person name="Miao Y.-G."/>
            <person name="Xu H."/>
            <person name="Zhang Y.-X."/>
            <person name="Xiong H."/>
            <person name="Lu G."/>
            <person name="Lu L.-F."/>
            <person name="Jiang H.-Q."/>
            <person name="Jia J."/>
            <person name="Tu Y.-F."/>
            <person name="Jiang J.-X."/>
            <person name="Gu W.-Y."/>
            <person name="Zhang Y.-Q."/>
            <person name="Cai Z."/>
            <person name="Sheng H.-H."/>
            <person name="Yin H.-F."/>
            <person name="Zhang Y."/>
            <person name="Zhu G.-F."/>
            <person name="Wan M."/>
            <person name="Huang H.-L."/>
            <person name="Qian Z."/>
            <person name="Wang S.-Y."/>
            <person name="Ma W."/>
            <person name="Yao Z.-J."/>
            <person name="Shen Y."/>
            <person name="Qiang B.-Q."/>
            <person name="Xia Q.-C."/>
            <person name="Guo X.-K."/>
            <person name="Danchin A."/>
            <person name="Saint Girons I."/>
            <person name="Somerville R.L."/>
            <person name="Wen Y.-M."/>
            <person name="Shi M.-H."/>
            <person name="Chen Z."/>
            <person name="Xu J.-G."/>
            <person name="Zhao G.-P."/>
        </authorList>
    </citation>
    <scope>NUCLEOTIDE SEQUENCE [LARGE SCALE GENOMIC DNA]</scope>
    <source>
        <strain>56601</strain>
    </source>
</reference>
<dbReference type="EC" id="4.2.1.20" evidence="1"/>
<dbReference type="EMBL" id="AE010300">
    <property type="protein sequence ID" value="AAN50486.1"/>
    <property type="molecule type" value="Genomic_DNA"/>
</dbReference>
<dbReference type="RefSeq" id="NP_713468.1">
    <property type="nucleotide sequence ID" value="NC_004342.2"/>
</dbReference>
<dbReference type="RefSeq" id="WP_001084828.1">
    <property type="nucleotide sequence ID" value="NC_004342.2"/>
</dbReference>
<dbReference type="SMR" id="Q8F150"/>
<dbReference type="FunCoup" id="Q8F150">
    <property type="interactions" value="459"/>
</dbReference>
<dbReference type="STRING" id="189518.LA_3288"/>
<dbReference type="PaxDb" id="189518-LA_3288"/>
<dbReference type="EnsemblBacteria" id="AAN50486">
    <property type="protein sequence ID" value="AAN50486"/>
    <property type="gene ID" value="LA_3288"/>
</dbReference>
<dbReference type="GeneID" id="61144192"/>
<dbReference type="KEGG" id="lil:LA_3288"/>
<dbReference type="PATRIC" id="fig|189518.3.peg.3258"/>
<dbReference type="HOGENOM" id="CLU_016734_0_0_12"/>
<dbReference type="InParanoid" id="Q8F150"/>
<dbReference type="OrthoDB" id="9804578at2"/>
<dbReference type="UniPathway" id="UPA00035">
    <property type="reaction ID" value="UER00044"/>
</dbReference>
<dbReference type="Proteomes" id="UP000001408">
    <property type="component" value="Chromosome I"/>
</dbReference>
<dbReference type="GO" id="GO:0005829">
    <property type="term" value="C:cytosol"/>
    <property type="evidence" value="ECO:0000318"/>
    <property type="project" value="GO_Central"/>
</dbReference>
<dbReference type="GO" id="GO:0004834">
    <property type="term" value="F:tryptophan synthase activity"/>
    <property type="evidence" value="ECO:0000318"/>
    <property type="project" value="GO_Central"/>
</dbReference>
<dbReference type="GO" id="GO:0000162">
    <property type="term" value="P:L-tryptophan biosynthetic process"/>
    <property type="evidence" value="ECO:0000318"/>
    <property type="project" value="GO_Central"/>
</dbReference>
<dbReference type="CDD" id="cd04724">
    <property type="entry name" value="Tryptophan_synthase_alpha"/>
    <property type="match status" value="1"/>
</dbReference>
<dbReference type="FunFam" id="3.20.20.70:FF:000037">
    <property type="entry name" value="Tryptophan synthase alpha chain"/>
    <property type="match status" value="1"/>
</dbReference>
<dbReference type="Gene3D" id="3.20.20.70">
    <property type="entry name" value="Aldolase class I"/>
    <property type="match status" value="1"/>
</dbReference>
<dbReference type="HAMAP" id="MF_00131">
    <property type="entry name" value="Trp_synth_alpha"/>
    <property type="match status" value="1"/>
</dbReference>
<dbReference type="InterPro" id="IPR013785">
    <property type="entry name" value="Aldolase_TIM"/>
</dbReference>
<dbReference type="InterPro" id="IPR011060">
    <property type="entry name" value="RibuloseP-bd_barrel"/>
</dbReference>
<dbReference type="InterPro" id="IPR018204">
    <property type="entry name" value="Trp_synthase_alpha_AS"/>
</dbReference>
<dbReference type="InterPro" id="IPR002028">
    <property type="entry name" value="Trp_synthase_suA"/>
</dbReference>
<dbReference type="NCBIfam" id="TIGR00262">
    <property type="entry name" value="trpA"/>
    <property type="match status" value="1"/>
</dbReference>
<dbReference type="PANTHER" id="PTHR43406:SF1">
    <property type="entry name" value="TRYPTOPHAN SYNTHASE ALPHA CHAIN, CHLOROPLASTIC"/>
    <property type="match status" value="1"/>
</dbReference>
<dbReference type="PANTHER" id="PTHR43406">
    <property type="entry name" value="TRYPTOPHAN SYNTHASE, ALPHA CHAIN"/>
    <property type="match status" value="1"/>
</dbReference>
<dbReference type="Pfam" id="PF00290">
    <property type="entry name" value="Trp_syntA"/>
    <property type="match status" value="1"/>
</dbReference>
<dbReference type="SUPFAM" id="SSF51366">
    <property type="entry name" value="Ribulose-phoshate binding barrel"/>
    <property type="match status" value="1"/>
</dbReference>
<dbReference type="PROSITE" id="PS00167">
    <property type="entry name" value="TRP_SYNTHASE_ALPHA"/>
    <property type="match status" value="1"/>
</dbReference>
<organism>
    <name type="scientific">Leptospira interrogans serogroup Icterohaemorrhagiae serovar Lai (strain 56601)</name>
    <dbReference type="NCBI Taxonomy" id="189518"/>
    <lineage>
        <taxon>Bacteria</taxon>
        <taxon>Pseudomonadati</taxon>
        <taxon>Spirochaetota</taxon>
        <taxon>Spirochaetia</taxon>
        <taxon>Leptospirales</taxon>
        <taxon>Leptospiraceae</taxon>
        <taxon>Leptospira</taxon>
    </lineage>
</organism>
<sequence>MNSISSVFSSEQSVFIPYISLGDPDYDSCVIWADALIRGGAGILELGIPFTDPVADGPVIQKAFKRSLAHPFSMDKILEVTSEIHKLHPQIPLVYLTYFNPLFSMGLESFTERAKNSGIQGLIIPDLPFDTPEAEEFFSQLERKRIDFIHLVTPATTEDRIRSMKSLASGFIYYVTSYGVTGERGSIASGLEDRIRMVRKIVGLPVCAGFGISTSDQSKVISTYADGVIIGSAVQRIIEENGSDRNNCADKLLAYASEIRASMR</sequence>
<gene>
    <name evidence="1" type="primary">trpA</name>
    <name type="ordered locus">LA_3288</name>
</gene>
<feature type="chain" id="PRO_0000098802" description="Tryptophan synthase alpha chain">
    <location>
        <begin position="1"/>
        <end position="264"/>
    </location>
</feature>
<feature type="active site" description="Proton acceptor" evidence="1">
    <location>
        <position position="45"/>
    </location>
</feature>
<feature type="active site" description="Proton acceptor" evidence="1">
    <location>
        <position position="56"/>
    </location>
</feature>
<protein>
    <recommendedName>
        <fullName evidence="1">Tryptophan synthase alpha chain</fullName>
        <ecNumber evidence="1">4.2.1.20</ecNumber>
    </recommendedName>
</protein>
<evidence type="ECO:0000255" key="1">
    <source>
        <dbReference type="HAMAP-Rule" id="MF_00131"/>
    </source>
</evidence>
<comment type="function">
    <text evidence="1">The alpha subunit is responsible for the aldol cleavage of indoleglycerol phosphate to indole and glyceraldehyde 3-phosphate.</text>
</comment>
<comment type="catalytic activity">
    <reaction evidence="1">
        <text>(1S,2R)-1-C-(indol-3-yl)glycerol 3-phosphate + L-serine = D-glyceraldehyde 3-phosphate + L-tryptophan + H2O</text>
        <dbReference type="Rhea" id="RHEA:10532"/>
        <dbReference type="ChEBI" id="CHEBI:15377"/>
        <dbReference type="ChEBI" id="CHEBI:33384"/>
        <dbReference type="ChEBI" id="CHEBI:57912"/>
        <dbReference type="ChEBI" id="CHEBI:58866"/>
        <dbReference type="ChEBI" id="CHEBI:59776"/>
        <dbReference type="EC" id="4.2.1.20"/>
    </reaction>
</comment>
<comment type="pathway">
    <text evidence="1">Amino-acid biosynthesis; L-tryptophan biosynthesis; L-tryptophan from chorismate: step 5/5.</text>
</comment>
<comment type="subunit">
    <text evidence="1">Tetramer of two alpha and two beta chains.</text>
</comment>
<comment type="similarity">
    <text evidence="1">Belongs to the TrpA family.</text>
</comment>
<accession>Q8F150</accession>
<keyword id="KW-0028">Amino-acid biosynthesis</keyword>
<keyword id="KW-0057">Aromatic amino acid biosynthesis</keyword>
<keyword id="KW-0456">Lyase</keyword>
<keyword id="KW-1185">Reference proteome</keyword>
<keyword id="KW-0822">Tryptophan biosynthesis</keyword>
<proteinExistence type="inferred from homology"/>